<feature type="chain" id="PRO_0000433215" description="Uncharacterized protein C5orf67">
    <location>
        <begin position="1"/>
        <end position="127"/>
    </location>
</feature>
<feature type="region of interest" description="Disordered" evidence="1">
    <location>
        <begin position="69"/>
        <end position="94"/>
    </location>
</feature>
<name>CE067_HUMAN</name>
<reference key="1">
    <citation type="journal article" date="2004" name="Nature">
        <title>The DNA sequence and comparative analysis of human chromosome 5.</title>
        <authorList>
            <person name="Schmutz J."/>
            <person name="Martin J."/>
            <person name="Terry A."/>
            <person name="Couronne O."/>
            <person name="Grimwood J."/>
            <person name="Lowry S."/>
            <person name="Gordon L.A."/>
            <person name="Scott D."/>
            <person name="Xie G."/>
            <person name="Huang W."/>
            <person name="Hellsten U."/>
            <person name="Tran-Gyamfi M."/>
            <person name="She X."/>
            <person name="Prabhakar S."/>
            <person name="Aerts A."/>
            <person name="Altherr M."/>
            <person name="Bajorek E."/>
            <person name="Black S."/>
            <person name="Branscomb E."/>
            <person name="Caoile C."/>
            <person name="Challacombe J.F."/>
            <person name="Chan Y.M."/>
            <person name="Denys M."/>
            <person name="Detter J.C."/>
            <person name="Escobar J."/>
            <person name="Flowers D."/>
            <person name="Fotopulos D."/>
            <person name="Glavina T."/>
            <person name="Gomez M."/>
            <person name="Gonzales E."/>
            <person name="Goodstein D."/>
            <person name="Grigoriev I."/>
            <person name="Groza M."/>
            <person name="Hammon N."/>
            <person name="Hawkins T."/>
            <person name="Haydu L."/>
            <person name="Israni S."/>
            <person name="Jett J."/>
            <person name="Kadner K."/>
            <person name="Kimball H."/>
            <person name="Kobayashi A."/>
            <person name="Lopez F."/>
            <person name="Lou Y."/>
            <person name="Martinez D."/>
            <person name="Medina C."/>
            <person name="Morgan J."/>
            <person name="Nandkeshwar R."/>
            <person name="Noonan J.P."/>
            <person name="Pitluck S."/>
            <person name="Pollard M."/>
            <person name="Predki P."/>
            <person name="Priest J."/>
            <person name="Ramirez L."/>
            <person name="Retterer J."/>
            <person name="Rodriguez A."/>
            <person name="Rogers S."/>
            <person name="Salamov A."/>
            <person name="Salazar A."/>
            <person name="Thayer N."/>
            <person name="Tice H."/>
            <person name="Tsai M."/>
            <person name="Ustaszewska A."/>
            <person name="Vo N."/>
            <person name="Wheeler J."/>
            <person name="Wu K."/>
            <person name="Yang J."/>
            <person name="Dickson M."/>
            <person name="Cheng J.-F."/>
            <person name="Eichler E.E."/>
            <person name="Olsen A."/>
            <person name="Pennacchio L.A."/>
            <person name="Rokhsar D.S."/>
            <person name="Richardson P."/>
            <person name="Lucas S.M."/>
            <person name="Myers R.M."/>
            <person name="Rubin E.M."/>
        </authorList>
    </citation>
    <scope>NUCLEOTIDE SEQUENCE [LARGE SCALE GENOMIC DNA]</scope>
</reference>
<gene>
    <name evidence="2" type="primary">C5orf67</name>
</gene>
<protein>
    <recommendedName>
        <fullName>Uncharacterized protein C5orf67</fullName>
    </recommendedName>
</protein>
<sequence>MKRIFYKHRKRRAPVFKEPEHGYQSLPELVLVPAQPLVCLGDYRTPDPGGLFPWSLRLMMPGAWTKLPGDGGSVPEKGKHGILGAQGQEHPGLNVSSPFSSPWTCYLSGHQPQNNNSPELQVKEILL</sequence>
<proteinExistence type="predicted"/>
<keyword id="KW-1185">Reference proteome</keyword>
<dbReference type="EMBL" id="AC022431">
    <property type="status" value="NOT_ANNOTATED_CDS"/>
    <property type="molecule type" value="Genomic_DNA"/>
</dbReference>
<dbReference type="RefSeq" id="NP_001273982.1">
    <property type="nucleotide sequence ID" value="NM_001287053.1"/>
</dbReference>
<dbReference type="RefSeq" id="XP_016864431.1">
    <property type="nucleotide sequence ID" value="XM_017008942.1"/>
</dbReference>
<dbReference type="STRING" id="9606.ENSP00000406718"/>
<dbReference type="GlyGen" id="F2Z3F1">
    <property type="glycosylation" value="1 site, 1 O-linked glycan (1 site)"/>
</dbReference>
<dbReference type="BioMuta" id="C5orf67"/>
<dbReference type="PaxDb" id="9606-ENSP00000406718"/>
<dbReference type="UCSC" id="uc032uuu.2">
    <property type="organism name" value="human"/>
</dbReference>
<dbReference type="AGR" id="HGNC:51252"/>
<dbReference type="GeneCards" id="C5orf67"/>
<dbReference type="HGNC" id="HGNC:51252">
    <property type="gene designation" value="C5orf67"/>
</dbReference>
<dbReference type="neXtProt" id="NX_F2Z3F1"/>
<dbReference type="eggNOG" id="ENOG502THIH">
    <property type="taxonomic scope" value="Eukaryota"/>
</dbReference>
<dbReference type="HOGENOM" id="CLU_2102412_0_0_1"/>
<dbReference type="InParanoid" id="F2Z3F1"/>
<dbReference type="PAN-GO" id="F2Z3F1">
    <property type="GO annotations" value="0 GO annotations based on evolutionary models"/>
</dbReference>
<dbReference type="PhylomeDB" id="F2Z3F1"/>
<dbReference type="TreeFam" id="TF354199"/>
<dbReference type="PathwayCommons" id="F2Z3F1"/>
<dbReference type="SignaLink" id="F2Z3F1"/>
<dbReference type="BioGRID-ORCS" id="101928448">
    <property type="hits" value="3 hits in 132 CRISPR screens"/>
</dbReference>
<dbReference type="ChiTaRS" id="C5orf67">
    <property type="organism name" value="human"/>
</dbReference>
<dbReference type="Pharos" id="F2Z3F1">
    <property type="development level" value="Tdark"/>
</dbReference>
<dbReference type="PRO" id="PR:F2Z3F1"/>
<dbReference type="Proteomes" id="UP000005640">
    <property type="component" value="Unplaced"/>
</dbReference>
<dbReference type="RNAct" id="F2Z3F1">
    <property type="molecule type" value="protein"/>
</dbReference>
<evidence type="ECO:0000256" key="1">
    <source>
        <dbReference type="SAM" id="MobiDB-lite"/>
    </source>
</evidence>
<evidence type="ECO:0000312" key="2">
    <source>
        <dbReference type="HGNC" id="HGNC:51252"/>
    </source>
</evidence>
<organism>
    <name type="scientific">Homo sapiens</name>
    <name type="common">Human</name>
    <dbReference type="NCBI Taxonomy" id="9606"/>
    <lineage>
        <taxon>Eukaryota</taxon>
        <taxon>Metazoa</taxon>
        <taxon>Chordata</taxon>
        <taxon>Craniata</taxon>
        <taxon>Vertebrata</taxon>
        <taxon>Euteleostomi</taxon>
        <taxon>Mammalia</taxon>
        <taxon>Eutheria</taxon>
        <taxon>Euarchontoglires</taxon>
        <taxon>Primates</taxon>
        <taxon>Haplorrhini</taxon>
        <taxon>Catarrhini</taxon>
        <taxon>Hominidae</taxon>
        <taxon>Homo</taxon>
    </lineage>
</organism>
<accession>F2Z3F1</accession>